<accession>B0T834</accession>
<proteinExistence type="inferred from homology"/>
<evidence type="ECO:0000255" key="1">
    <source>
        <dbReference type="HAMAP-Rule" id="MF_00038"/>
    </source>
</evidence>
<dbReference type="EC" id="2.7.8.13" evidence="1"/>
<dbReference type="EMBL" id="CP000927">
    <property type="protein sequence ID" value="ABZ72797.1"/>
    <property type="molecule type" value="Genomic_DNA"/>
</dbReference>
<dbReference type="SMR" id="B0T834"/>
<dbReference type="STRING" id="366602.Caul_3670"/>
<dbReference type="KEGG" id="cak:Caul_3670"/>
<dbReference type="eggNOG" id="COG0472">
    <property type="taxonomic scope" value="Bacteria"/>
</dbReference>
<dbReference type="HOGENOM" id="CLU_023982_0_0_5"/>
<dbReference type="OrthoDB" id="9805475at2"/>
<dbReference type="UniPathway" id="UPA00219"/>
<dbReference type="GO" id="GO:0005886">
    <property type="term" value="C:plasma membrane"/>
    <property type="evidence" value="ECO:0007669"/>
    <property type="project" value="UniProtKB-SubCell"/>
</dbReference>
<dbReference type="GO" id="GO:0046872">
    <property type="term" value="F:metal ion binding"/>
    <property type="evidence" value="ECO:0007669"/>
    <property type="project" value="UniProtKB-KW"/>
</dbReference>
<dbReference type="GO" id="GO:0008963">
    <property type="term" value="F:phospho-N-acetylmuramoyl-pentapeptide-transferase activity"/>
    <property type="evidence" value="ECO:0007669"/>
    <property type="project" value="UniProtKB-UniRule"/>
</dbReference>
<dbReference type="GO" id="GO:0051992">
    <property type="term" value="F:UDP-N-acetylmuramoyl-L-alanyl-D-glutamyl-meso-2,6-diaminopimelyl-D-alanyl-D-alanine:undecaprenyl-phosphate transferase activity"/>
    <property type="evidence" value="ECO:0007669"/>
    <property type="project" value="RHEA"/>
</dbReference>
<dbReference type="GO" id="GO:0051301">
    <property type="term" value="P:cell division"/>
    <property type="evidence" value="ECO:0007669"/>
    <property type="project" value="UniProtKB-KW"/>
</dbReference>
<dbReference type="GO" id="GO:0071555">
    <property type="term" value="P:cell wall organization"/>
    <property type="evidence" value="ECO:0007669"/>
    <property type="project" value="UniProtKB-KW"/>
</dbReference>
<dbReference type="GO" id="GO:0009252">
    <property type="term" value="P:peptidoglycan biosynthetic process"/>
    <property type="evidence" value="ECO:0007669"/>
    <property type="project" value="UniProtKB-UniRule"/>
</dbReference>
<dbReference type="GO" id="GO:0008360">
    <property type="term" value="P:regulation of cell shape"/>
    <property type="evidence" value="ECO:0007669"/>
    <property type="project" value="UniProtKB-KW"/>
</dbReference>
<dbReference type="CDD" id="cd06852">
    <property type="entry name" value="GT_MraY"/>
    <property type="match status" value="1"/>
</dbReference>
<dbReference type="HAMAP" id="MF_00038">
    <property type="entry name" value="MraY"/>
    <property type="match status" value="1"/>
</dbReference>
<dbReference type="InterPro" id="IPR000715">
    <property type="entry name" value="Glycosyl_transferase_4"/>
</dbReference>
<dbReference type="InterPro" id="IPR003524">
    <property type="entry name" value="PNAcMuramoyl-5peptid_Trfase"/>
</dbReference>
<dbReference type="InterPro" id="IPR018480">
    <property type="entry name" value="PNAcMuramoyl-5peptid_Trfase_CS"/>
</dbReference>
<dbReference type="NCBIfam" id="TIGR00445">
    <property type="entry name" value="mraY"/>
    <property type="match status" value="1"/>
</dbReference>
<dbReference type="PANTHER" id="PTHR22926">
    <property type="entry name" value="PHOSPHO-N-ACETYLMURAMOYL-PENTAPEPTIDE-TRANSFERASE"/>
    <property type="match status" value="1"/>
</dbReference>
<dbReference type="PANTHER" id="PTHR22926:SF5">
    <property type="entry name" value="PHOSPHO-N-ACETYLMURAMOYL-PENTAPEPTIDE-TRANSFERASE HOMOLOG"/>
    <property type="match status" value="1"/>
</dbReference>
<dbReference type="Pfam" id="PF00953">
    <property type="entry name" value="Glycos_transf_4"/>
    <property type="match status" value="1"/>
</dbReference>
<dbReference type="PROSITE" id="PS01348">
    <property type="entry name" value="MRAY_2"/>
    <property type="match status" value="1"/>
</dbReference>
<feature type="chain" id="PRO_1000074536" description="Phospho-N-acetylmuramoyl-pentapeptide-transferase">
    <location>
        <begin position="1"/>
        <end position="371"/>
    </location>
</feature>
<feature type="transmembrane region" description="Helical" evidence="1">
    <location>
        <begin position="25"/>
        <end position="45"/>
    </location>
</feature>
<feature type="transmembrane region" description="Helical" evidence="1">
    <location>
        <begin position="79"/>
        <end position="99"/>
    </location>
</feature>
<feature type="transmembrane region" description="Helical" evidence="1">
    <location>
        <begin position="104"/>
        <end position="124"/>
    </location>
</feature>
<feature type="transmembrane region" description="Helical" evidence="1">
    <location>
        <begin position="139"/>
        <end position="159"/>
    </location>
</feature>
<feature type="transmembrane region" description="Helical" evidence="1">
    <location>
        <begin position="179"/>
        <end position="199"/>
    </location>
</feature>
<feature type="transmembrane region" description="Helical" evidence="1">
    <location>
        <begin position="210"/>
        <end position="230"/>
    </location>
</feature>
<feature type="transmembrane region" description="Helical" evidence="1">
    <location>
        <begin position="247"/>
        <end position="267"/>
    </location>
</feature>
<feature type="transmembrane region" description="Helical" evidence="1">
    <location>
        <begin position="274"/>
        <end position="294"/>
    </location>
</feature>
<feature type="transmembrane region" description="Helical" evidence="1">
    <location>
        <begin position="299"/>
        <end position="319"/>
    </location>
</feature>
<feature type="transmembrane region" description="Helical" evidence="1">
    <location>
        <begin position="348"/>
        <end position="368"/>
    </location>
</feature>
<gene>
    <name evidence="1" type="primary">mraY</name>
    <name type="ordered locus">Caul_3670</name>
</gene>
<reference key="1">
    <citation type="submission" date="2008-01" db="EMBL/GenBank/DDBJ databases">
        <title>Complete sequence of chromosome of Caulobacter sp. K31.</title>
        <authorList>
            <consortium name="US DOE Joint Genome Institute"/>
            <person name="Copeland A."/>
            <person name="Lucas S."/>
            <person name="Lapidus A."/>
            <person name="Barry K."/>
            <person name="Glavina del Rio T."/>
            <person name="Dalin E."/>
            <person name="Tice H."/>
            <person name="Pitluck S."/>
            <person name="Bruce D."/>
            <person name="Goodwin L."/>
            <person name="Thompson L.S."/>
            <person name="Brettin T."/>
            <person name="Detter J.C."/>
            <person name="Han C."/>
            <person name="Schmutz J."/>
            <person name="Larimer F."/>
            <person name="Land M."/>
            <person name="Hauser L."/>
            <person name="Kyrpides N."/>
            <person name="Kim E."/>
            <person name="Stephens C."/>
            <person name="Richardson P."/>
        </authorList>
    </citation>
    <scope>NUCLEOTIDE SEQUENCE [LARGE SCALE GENOMIC DNA]</scope>
    <source>
        <strain>K31</strain>
    </source>
</reference>
<name>MRAY_CAUSK</name>
<sequence length="371" mass="39849">MLYFLYDWLSRGGHEHVPVLNLLKYLTFRTGMSMLTAYVVAVAMGSRFIRWMKAKQGKGQPIRADGIARHVVEKAGTPTMGGFMILAGLFVGSLLFADLKNVHVWVVLGITGSFGVLGFMDDYAKVTKQTTAGLSSSQKLIAQFIISILAAVVLIIFAPKSPTTVGLETSVVFPILKNLVINLGWFYVAFAAITIAGFSNAVNLTDGLDGLAIVPVMFAASTFGLIAYLVGNVKFADYLNLHYVPSVGELAVVCGAIIGGGMGFLWYNAPPAKIFMGDTGSLALGGALGSIAVCAKHELVLGIVGGLFVAEALSVMIQVAYFKKTGKRIFLMAPIHHHFEKLGWAESTVVIRFWIVAMMLSFVGLATLKLR</sequence>
<comment type="function">
    <text evidence="1">Catalyzes the initial step of the lipid cycle reactions in the biosynthesis of the cell wall peptidoglycan: transfers peptidoglycan precursor phospho-MurNAc-pentapeptide from UDP-MurNAc-pentapeptide onto the lipid carrier undecaprenyl phosphate, yielding undecaprenyl-pyrophosphoryl-MurNAc-pentapeptide, known as lipid I.</text>
</comment>
<comment type="catalytic activity">
    <reaction evidence="1">
        <text>UDP-N-acetyl-alpha-D-muramoyl-L-alanyl-gamma-D-glutamyl-meso-2,6-diaminopimeloyl-D-alanyl-D-alanine + di-trans,octa-cis-undecaprenyl phosphate = di-trans,octa-cis-undecaprenyl diphospho-N-acetyl-alpha-D-muramoyl-L-alanyl-D-glutamyl-meso-2,6-diaminopimeloyl-D-alanyl-D-alanine + UMP</text>
        <dbReference type="Rhea" id="RHEA:28386"/>
        <dbReference type="ChEBI" id="CHEBI:57865"/>
        <dbReference type="ChEBI" id="CHEBI:60392"/>
        <dbReference type="ChEBI" id="CHEBI:61386"/>
        <dbReference type="ChEBI" id="CHEBI:61387"/>
        <dbReference type="EC" id="2.7.8.13"/>
    </reaction>
</comment>
<comment type="cofactor">
    <cofactor evidence="1">
        <name>Mg(2+)</name>
        <dbReference type="ChEBI" id="CHEBI:18420"/>
    </cofactor>
</comment>
<comment type="pathway">
    <text evidence="1">Cell wall biogenesis; peptidoglycan biosynthesis.</text>
</comment>
<comment type="subcellular location">
    <subcellularLocation>
        <location evidence="1">Cell inner membrane</location>
        <topology evidence="1">Multi-pass membrane protein</topology>
    </subcellularLocation>
</comment>
<comment type="similarity">
    <text evidence="1">Belongs to the glycosyltransferase 4 family. MraY subfamily.</text>
</comment>
<organism>
    <name type="scientific">Caulobacter sp. (strain K31)</name>
    <dbReference type="NCBI Taxonomy" id="366602"/>
    <lineage>
        <taxon>Bacteria</taxon>
        <taxon>Pseudomonadati</taxon>
        <taxon>Pseudomonadota</taxon>
        <taxon>Alphaproteobacteria</taxon>
        <taxon>Caulobacterales</taxon>
        <taxon>Caulobacteraceae</taxon>
        <taxon>Caulobacter</taxon>
    </lineage>
</organism>
<protein>
    <recommendedName>
        <fullName evidence="1">Phospho-N-acetylmuramoyl-pentapeptide-transferase</fullName>
        <ecNumber evidence="1">2.7.8.13</ecNumber>
    </recommendedName>
    <alternativeName>
        <fullName evidence="1">UDP-MurNAc-pentapeptide phosphotransferase</fullName>
    </alternativeName>
</protein>
<keyword id="KW-0131">Cell cycle</keyword>
<keyword id="KW-0132">Cell division</keyword>
<keyword id="KW-0997">Cell inner membrane</keyword>
<keyword id="KW-1003">Cell membrane</keyword>
<keyword id="KW-0133">Cell shape</keyword>
<keyword id="KW-0961">Cell wall biogenesis/degradation</keyword>
<keyword id="KW-0460">Magnesium</keyword>
<keyword id="KW-0472">Membrane</keyword>
<keyword id="KW-0479">Metal-binding</keyword>
<keyword id="KW-0573">Peptidoglycan synthesis</keyword>
<keyword id="KW-0808">Transferase</keyword>
<keyword id="KW-0812">Transmembrane</keyword>
<keyword id="KW-1133">Transmembrane helix</keyword>